<sequence length="932" mass="101464">MEARALEHERRLAESHGQEALKHAIAAAEIYMRAAEKAANPKDRNRLQRKCSDLIALGERLKANAKSAATSARSPVPESTRTLTIAEKTLLLKSSKLHGNIFPPWEKTPASDEFAASKAADGCFTDHSPFTLSPEQQDIFAGWKRPHEIFMDVPERGVDVFMTATESIDLGQDLATDCSVVASLCAAVRQFGPRTGSLLSSLMYPYDDDVKRPAVSQNGKYIFRMYFNGCWRKVLIDDRLPTSSSERTLYVVDRRNPYLIWPALIEKAYLKIRGGYDFPGSNSGTDLHALTGWIPEQIFLQTDDIELNETWSRIKTAYEQGNALVTLGTGKFSREEERTLGLVREHDYAVLDLRNDGNNRLFLVKNPWRDSLVWTGVGSTATSSTDRSGSPEESMSNTFWMTFEDVLQHFDSLYVNWSPSLFRFRQDHHFTWTIPPKAEELVFTQNPQYSILSHTGSPVWILLNRHWQDSELDILRERKQEHDFHQPLKSLGYMSLSLFASHPPGTRIPLSEGSHHALHQGPFVDSPNTLLRYSPTPGVAQTLVIAQSDLPLPSYSFTLSFFSNSPLTISPASDPLPYNETITGAWTRRTAGGSTVYPSYVTNPQYALTLTRPSPLSLVLSTERADNLPVHIAVLYSNGGQRVTAVVGRDLICSSAEYQRGCTFASTLPSSNTSNVTSSVASNNHGHTSSSLIDPGTYTIVLSTYEPGQTGRYSLRVSAACPFTIEPILSDAAGRLRTPAPSPATFRQGEGRVRARVDVARLTRASVLARSVKTGSTTQKTAMVRVALELGTIEGRKRVLASTASGGGGELAASLSNLSLSERLGGIGGIGGGHIHGGQGTTEGDGYSAKGEFADASLGLRTREVDLDPDVIRVYGGLWLVVEQIGGGGQGHVTEGSDDDGGGGGGGGGGVHVEISSDGVVSIGEWEVADED</sequence>
<keyword id="KW-0378">Hydrolase</keyword>
<keyword id="KW-0645">Protease</keyword>
<keyword id="KW-1185">Reference proteome</keyword>
<keyword id="KW-0788">Thiol protease</keyword>
<protein>
    <recommendedName>
        <fullName>Calpain-like protease palB/cpr-8</fullName>
        <ecNumber>3.4.22.-</ecNumber>
    </recommendedName>
    <alternativeName>
        <fullName>Cysteine protease 8</fullName>
    </alternativeName>
</protein>
<comment type="function">
    <text evidence="1">Required for the proteolytic cleavage of the transcription factor pacc-1 in response to alkaline ambient pH.</text>
</comment>
<comment type="similarity">
    <text evidence="4">Belongs to the peptidase C2 family. PalB/RIM13 subfamily.</text>
</comment>
<feature type="chain" id="PRO_0000207744" description="Calpain-like protease palB/cpr-8">
    <location>
        <begin position="1"/>
        <end position="932"/>
    </location>
</feature>
<feature type="domain" description="Calpain catalytic" evidence="2">
    <location>
        <begin position="96"/>
        <end position="419"/>
    </location>
</feature>
<feature type="region of interest" description="Disordered" evidence="3">
    <location>
        <begin position="890"/>
        <end position="932"/>
    </location>
</feature>
<feature type="compositionally biased region" description="Gly residues" evidence="3">
    <location>
        <begin position="902"/>
        <end position="911"/>
    </location>
</feature>
<feature type="active site" evidence="2">
    <location>
        <position position="178"/>
    </location>
</feature>
<feature type="active site" evidence="2">
    <location>
        <position position="346"/>
    </location>
</feature>
<feature type="active site" evidence="2">
    <location>
        <position position="366"/>
    </location>
</feature>
<proteinExistence type="inferred from homology"/>
<gene>
    <name type="primary">cpr-8</name>
    <name type="synonym">rim13</name>
    <name type="ORF">NCU00317</name>
</gene>
<name>PALB_NEUCR</name>
<evidence type="ECO:0000250" key="1"/>
<evidence type="ECO:0000255" key="2">
    <source>
        <dbReference type="PROSITE-ProRule" id="PRU00239"/>
    </source>
</evidence>
<evidence type="ECO:0000256" key="3">
    <source>
        <dbReference type="SAM" id="MobiDB-lite"/>
    </source>
</evidence>
<evidence type="ECO:0000305" key="4"/>
<accession>Q7RZP7</accession>
<accession>U9W3D3</accession>
<organism>
    <name type="scientific">Neurospora crassa (strain ATCC 24698 / 74-OR23-1A / CBS 708.71 / DSM 1257 / FGSC 987)</name>
    <dbReference type="NCBI Taxonomy" id="367110"/>
    <lineage>
        <taxon>Eukaryota</taxon>
        <taxon>Fungi</taxon>
        <taxon>Dikarya</taxon>
        <taxon>Ascomycota</taxon>
        <taxon>Pezizomycotina</taxon>
        <taxon>Sordariomycetes</taxon>
        <taxon>Sordariomycetidae</taxon>
        <taxon>Sordariales</taxon>
        <taxon>Sordariaceae</taxon>
        <taxon>Neurospora</taxon>
    </lineage>
</organism>
<reference key="1">
    <citation type="journal article" date="2003" name="Nature">
        <title>The genome sequence of the filamentous fungus Neurospora crassa.</title>
        <authorList>
            <person name="Galagan J.E."/>
            <person name="Calvo S.E."/>
            <person name="Borkovich K.A."/>
            <person name="Selker E.U."/>
            <person name="Read N.D."/>
            <person name="Jaffe D.B."/>
            <person name="FitzHugh W."/>
            <person name="Ma L.-J."/>
            <person name="Smirnov S."/>
            <person name="Purcell S."/>
            <person name="Rehman B."/>
            <person name="Elkins T."/>
            <person name="Engels R."/>
            <person name="Wang S."/>
            <person name="Nielsen C.B."/>
            <person name="Butler J."/>
            <person name="Endrizzi M."/>
            <person name="Qui D."/>
            <person name="Ianakiev P."/>
            <person name="Bell-Pedersen D."/>
            <person name="Nelson M.A."/>
            <person name="Werner-Washburne M."/>
            <person name="Selitrennikoff C.P."/>
            <person name="Kinsey J.A."/>
            <person name="Braun E.L."/>
            <person name="Zelter A."/>
            <person name="Schulte U."/>
            <person name="Kothe G.O."/>
            <person name="Jedd G."/>
            <person name="Mewes H.-W."/>
            <person name="Staben C."/>
            <person name="Marcotte E."/>
            <person name="Greenberg D."/>
            <person name="Roy A."/>
            <person name="Foley K."/>
            <person name="Naylor J."/>
            <person name="Stange-Thomann N."/>
            <person name="Barrett R."/>
            <person name="Gnerre S."/>
            <person name="Kamal M."/>
            <person name="Kamvysselis M."/>
            <person name="Mauceli E.W."/>
            <person name="Bielke C."/>
            <person name="Rudd S."/>
            <person name="Frishman D."/>
            <person name="Krystofova S."/>
            <person name="Rasmussen C."/>
            <person name="Metzenberg R.L."/>
            <person name="Perkins D.D."/>
            <person name="Kroken S."/>
            <person name="Cogoni C."/>
            <person name="Macino G."/>
            <person name="Catcheside D.E.A."/>
            <person name="Li W."/>
            <person name="Pratt R.J."/>
            <person name="Osmani S.A."/>
            <person name="DeSouza C.P.C."/>
            <person name="Glass N.L."/>
            <person name="Orbach M.J."/>
            <person name="Berglund J.A."/>
            <person name="Voelker R."/>
            <person name="Yarden O."/>
            <person name="Plamann M."/>
            <person name="Seiler S."/>
            <person name="Dunlap J.C."/>
            <person name="Radford A."/>
            <person name="Aramayo R."/>
            <person name="Natvig D.O."/>
            <person name="Alex L.A."/>
            <person name="Mannhaupt G."/>
            <person name="Ebbole D.J."/>
            <person name="Freitag M."/>
            <person name="Paulsen I."/>
            <person name="Sachs M.S."/>
            <person name="Lander E.S."/>
            <person name="Nusbaum C."/>
            <person name="Birren B.W."/>
        </authorList>
    </citation>
    <scope>NUCLEOTIDE SEQUENCE [LARGE SCALE GENOMIC DNA]</scope>
    <source>
        <strain>ATCC 24698 / 74-OR23-1A / CBS 708.71 / DSM 1257 / FGSC 987</strain>
    </source>
</reference>
<dbReference type="EC" id="3.4.22.-"/>
<dbReference type="EMBL" id="CM002238">
    <property type="protein sequence ID" value="ESA43337.1"/>
    <property type="molecule type" value="Genomic_DNA"/>
</dbReference>
<dbReference type="RefSeq" id="XP_011393811.1">
    <property type="nucleotide sequence ID" value="XM_011395509.1"/>
</dbReference>
<dbReference type="SMR" id="Q7RZP7"/>
<dbReference type="STRING" id="367110.Q7RZP7"/>
<dbReference type="MEROPS" id="C02.008"/>
<dbReference type="PaxDb" id="5141-EFNCRP00000000354"/>
<dbReference type="EnsemblFungi" id="ESA43337">
    <property type="protein sequence ID" value="ESA43337"/>
    <property type="gene ID" value="NCU00317"/>
</dbReference>
<dbReference type="GeneID" id="3873926"/>
<dbReference type="KEGG" id="ncr:NCU00317"/>
<dbReference type="VEuPathDB" id="FungiDB:NCU00317"/>
<dbReference type="HOGENOM" id="CLU_006770_1_0_1"/>
<dbReference type="InParanoid" id="Q7RZP7"/>
<dbReference type="OrthoDB" id="167576at2759"/>
<dbReference type="Proteomes" id="UP000001805">
    <property type="component" value="Chromosome 3, Linkage Group III"/>
</dbReference>
<dbReference type="GO" id="GO:0004198">
    <property type="term" value="F:calcium-dependent cysteine-type endopeptidase activity"/>
    <property type="evidence" value="ECO:0007669"/>
    <property type="project" value="InterPro"/>
</dbReference>
<dbReference type="GO" id="GO:0004197">
    <property type="term" value="F:cysteine-type endopeptidase activity"/>
    <property type="evidence" value="ECO:0000318"/>
    <property type="project" value="GO_Central"/>
</dbReference>
<dbReference type="GO" id="GO:0006508">
    <property type="term" value="P:proteolysis"/>
    <property type="evidence" value="ECO:0000318"/>
    <property type="project" value="GO_Central"/>
</dbReference>
<dbReference type="CDD" id="cd00044">
    <property type="entry name" value="CysPc"/>
    <property type="match status" value="1"/>
</dbReference>
<dbReference type="Gene3D" id="2.60.120.380">
    <property type="match status" value="1"/>
</dbReference>
<dbReference type="Gene3D" id="3.90.70.10">
    <property type="entry name" value="Cysteine proteinases"/>
    <property type="match status" value="1"/>
</dbReference>
<dbReference type="InterPro" id="IPR022684">
    <property type="entry name" value="Calpain_cysteine_protease"/>
</dbReference>
<dbReference type="InterPro" id="IPR022682">
    <property type="entry name" value="Calpain_domain_III"/>
</dbReference>
<dbReference type="InterPro" id="IPR022683">
    <property type="entry name" value="Calpain_III"/>
</dbReference>
<dbReference type="InterPro" id="IPR036213">
    <property type="entry name" value="Calpain_III_sf"/>
</dbReference>
<dbReference type="InterPro" id="IPR051297">
    <property type="entry name" value="PalB/RIM13_Calpain-like"/>
</dbReference>
<dbReference type="InterPro" id="IPR038765">
    <property type="entry name" value="Papain-like_cys_pep_sf"/>
</dbReference>
<dbReference type="InterPro" id="IPR001300">
    <property type="entry name" value="Peptidase_C2_calpain_cat"/>
</dbReference>
<dbReference type="PANTHER" id="PTHR46143">
    <property type="entry name" value="CALPAIN-7"/>
    <property type="match status" value="1"/>
</dbReference>
<dbReference type="PANTHER" id="PTHR46143:SF1">
    <property type="entry name" value="CALPAIN-7"/>
    <property type="match status" value="1"/>
</dbReference>
<dbReference type="Pfam" id="PF01067">
    <property type="entry name" value="Calpain_III"/>
    <property type="match status" value="1"/>
</dbReference>
<dbReference type="Pfam" id="PF25435">
    <property type="entry name" value="PalB_C"/>
    <property type="match status" value="2"/>
</dbReference>
<dbReference type="Pfam" id="PF00648">
    <property type="entry name" value="Peptidase_C2"/>
    <property type="match status" value="1"/>
</dbReference>
<dbReference type="PRINTS" id="PR00704">
    <property type="entry name" value="CALPAIN"/>
</dbReference>
<dbReference type="SMART" id="SM00720">
    <property type="entry name" value="calpain_III"/>
    <property type="match status" value="1"/>
</dbReference>
<dbReference type="SMART" id="SM00230">
    <property type="entry name" value="CysPc"/>
    <property type="match status" value="1"/>
</dbReference>
<dbReference type="SUPFAM" id="SSF49758">
    <property type="entry name" value="Calpain large subunit, middle domain (domain III)"/>
    <property type="match status" value="2"/>
</dbReference>
<dbReference type="SUPFAM" id="SSF54001">
    <property type="entry name" value="Cysteine proteinases"/>
    <property type="match status" value="1"/>
</dbReference>
<dbReference type="PROSITE" id="PS50203">
    <property type="entry name" value="CALPAIN_CAT"/>
    <property type="match status" value="1"/>
</dbReference>